<name>AROA_BURCH</name>
<dbReference type="EC" id="2.5.1.19" evidence="1"/>
<dbReference type="EMBL" id="CP000458">
    <property type="protein sequence ID" value="ABK07798.1"/>
    <property type="molecule type" value="Genomic_DNA"/>
</dbReference>
<dbReference type="RefSeq" id="WP_011694213.1">
    <property type="nucleotide sequence ID" value="NC_008542.1"/>
</dbReference>
<dbReference type="SMR" id="A0K5M1"/>
<dbReference type="KEGG" id="bch:Bcen2424_1045"/>
<dbReference type="HOGENOM" id="CLU_024321_0_0_4"/>
<dbReference type="UniPathway" id="UPA00053">
    <property type="reaction ID" value="UER00089"/>
</dbReference>
<dbReference type="GO" id="GO:0005737">
    <property type="term" value="C:cytoplasm"/>
    <property type="evidence" value="ECO:0007669"/>
    <property type="project" value="UniProtKB-SubCell"/>
</dbReference>
<dbReference type="GO" id="GO:0003866">
    <property type="term" value="F:3-phosphoshikimate 1-carboxyvinyltransferase activity"/>
    <property type="evidence" value="ECO:0007669"/>
    <property type="project" value="UniProtKB-UniRule"/>
</dbReference>
<dbReference type="GO" id="GO:0008652">
    <property type="term" value="P:amino acid biosynthetic process"/>
    <property type="evidence" value="ECO:0007669"/>
    <property type="project" value="UniProtKB-KW"/>
</dbReference>
<dbReference type="GO" id="GO:0009073">
    <property type="term" value="P:aromatic amino acid family biosynthetic process"/>
    <property type="evidence" value="ECO:0007669"/>
    <property type="project" value="UniProtKB-KW"/>
</dbReference>
<dbReference type="GO" id="GO:0009423">
    <property type="term" value="P:chorismate biosynthetic process"/>
    <property type="evidence" value="ECO:0007669"/>
    <property type="project" value="UniProtKB-UniRule"/>
</dbReference>
<dbReference type="CDD" id="cd01556">
    <property type="entry name" value="EPSP_synthase"/>
    <property type="match status" value="1"/>
</dbReference>
<dbReference type="FunFam" id="3.65.10.10:FF:000003">
    <property type="entry name" value="3-phosphoshikimate 1-carboxyvinyltransferase"/>
    <property type="match status" value="1"/>
</dbReference>
<dbReference type="FunFam" id="3.65.10.10:FF:000004">
    <property type="entry name" value="3-phosphoshikimate 1-carboxyvinyltransferase"/>
    <property type="match status" value="1"/>
</dbReference>
<dbReference type="Gene3D" id="3.65.10.10">
    <property type="entry name" value="Enolpyruvate transferase domain"/>
    <property type="match status" value="2"/>
</dbReference>
<dbReference type="HAMAP" id="MF_00210">
    <property type="entry name" value="EPSP_synth"/>
    <property type="match status" value="1"/>
</dbReference>
<dbReference type="InterPro" id="IPR001986">
    <property type="entry name" value="Enolpyruvate_Tfrase_dom"/>
</dbReference>
<dbReference type="InterPro" id="IPR036968">
    <property type="entry name" value="Enolpyruvate_Tfrase_sf"/>
</dbReference>
<dbReference type="InterPro" id="IPR006264">
    <property type="entry name" value="EPSP_synthase"/>
</dbReference>
<dbReference type="InterPro" id="IPR023193">
    <property type="entry name" value="EPSP_synthase_CS"/>
</dbReference>
<dbReference type="InterPro" id="IPR013792">
    <property type="entry name" value="RNA3'P_cycl/enolpyr_Trfase_a/b"/>
</dbReference>
<dbReference type="NCBIfam" id="TIGR01356">
    <property type="entry name" value="aroA"/>
    <property type="match status" value="1"/>
</dbReference>
<dbReference type="PANTHER" id="PTHR21090">
    <property type="entry name" value="AROM/DEHYDROQUINATE SYNTHASE"/>
    <property type="match status" value="1"/>
</dbReference>
<dbReference type="PANTHER" id="PTHR21090:SF5">
    <property type="entry name" value="PENTAFUNCTIONAL AROM POLYPEPTIDE"/>
    <property type="match status" value="1"/>
</dbReference>
<dbReference type="Pfam" id="PF00275">
    <property type="entry name" value="EPSP_synthase"/>
    <property type="match status" value="1"/>
</dbReference>
<dbReference type="PIRSF" id="PIRSF000505">
    <property type="entry name" value="EPSPS"/>
    <property type="match status" value="1"/>
</dbReference>
<dbReference type="SUPFAM" id="SSF55205">
    <property type="entry name" value="EPT/RTPC-like"/>
    <property type="match status" value="1"/>
</dbReference>
<dbReference type="PROSITE" id="PS00104">
    <property type="entry name" value="EPSP_SYNTHASE_1"/>
    <property type="match status" value="1"/>
</dbReference>
<dbReference type="PROSITE" id="PS00885">
    <property type="entry name" value="EPSP_SYNTHASE_2"/>
    <property type="match status" value="1"/>
</dbReference>
<accession>A0K5M1</accession>
<protein>
    <recommendedName>
        <fullName evidence="1">3-phosphoshikimate 1-carboxyvinyltransferase</fullName>
        <ecNumber evidence="1">2.5.1.19</ecNumber>
    </recommendedName>
    <alternativeName>
        <fullName evidence="1">5-enolpyruvylshikimate-3-phosphate synthase</fullName>
        <shortName evidence="1">EPSP synthase</shortName>
        <shortName evidence="1">EPSPS</shortName>
    </alternativeName>
</protein>
<sequence>MDYLDLGPYSSASGTVRLPGSKSISNRVLLLAALAEGETTITNLLDSDDTRVMLDALGKLGVKLARDGDTCVVTGTRGAFTAKTADLFLGNAGTAVRPLTAALAVNGGDYRVHGVPRMHERPIGDLVDGLRQIGAQIDYELSEGYPPLRIKPATISVDAPIRVRGDVSSQFLTALLMTLPLVKAKDGQAVVEVDGELISKPYVDITIRLMARFGVTVERDGWQRFVVPAGVRYRSPGRIMVEGDASSASYFLAAGALGGGPLRVEGVGRASIQGDVGFANALMQMGANVTMGDDWIDVRGIGHDHGKLEPIDMDFNLIPDAAMTIAVAALFANGTSTLRNIASWRVKETDRIAAMATELRKVGAIVEEGPDYLVVTPPEKLTPNAAIDTYDDHRMAMCFSLVSLGGVPVRINDPKCVGKTFPDYFDRFAALAKA</sequence>
<organism>
    <name type="scientific">Burkholderia cenocepacia (strain HI2424)</name>
    <dbReference type="NCBI Taxonomy" id="331272"/>
    <lineage>
        <taxon>Bacteria</taxon>
        <taxon>Pseudomonadati</taxon>
        <taxon>Pseudomonadota</taxon>
        <taxon>Betaproteobacteria</taxon>
        <taxon>Burkholderiales</taxon>
        <taxon>Burkholderiaceae</taxon>
        <taxon>Burkholderia</taxon>
        <taxon>Burkholderia cepacia complex</taxon>
    </lineage>
</organism>
<proteinExistence type="inferred from homology"/>
<keyword id="KW-0028">Amino-acid biosynthesis</keyword>
<keyword id="KW-0057">Aromatic amino acid biosynthesis</keyword>
<keyword id="KW-0963">Cytoplasm</keyword>
<keyword id="KW-0808">Transferase</keyword>
<gene>
    <name evidence="1" type="primary">aroA</name>
    <name type="ordered locus">Bcen2424_1045</name>
</gene>
<reference key="1">
    <citation type="submission" date="2006-08" db="EMBL/GenBank/DDBJ databases">
        <title>Complete sequence of chromosome 1 of Burkholderia cenocepacia HI2424.</title>
        <authorList>
            <person name="Copeland A."/>
            <person name="Lucas S."/>
            <person name="Lapidus A."/>
            <person name="Barry K."/>
            <person name="Detter J.C."/>
            <person name="Glavina del Rio T."/>
            <person name="Hammon N."/>
            <person name="Israni S."/>
            <person name="Pitluck S."/>
            <person name="Chain P."/>
            <person name="Malfatti S."/>
            <person name="Shin M."/>
            <person name="Vergez L."/>
            <person name="Schmutz J."/>
            <person name="Larimer F."/>
            <person name="Land M."/>
            <person name="Hauser L."/>
            <person name="Kyrpides N."/>
            <person name="Kim E."/>
            <person name="LiPuma J.J."/>
            <person name="Gonzalez C.F."/>
            <person name="Konstantinidis K."/>
            <person name="Tiedje J.M."/>
            <person name="Richardson P."/>
        </authorList>
    </citation>
    <scope>NUCLEOTIDE SEQUENCE [LARGE SCALE GENOMIC DNA]</scope>
    <source>
        <strain>HI2424</strain>
    </source>
</reference>
<feature type="chain" id="PRO_1000012417" description="3-phosphoshikimate 1-carboxyvinyltransferase">
    <location>
        <begin position="1"/>
        <end position="434"/>
    </location>
</feature>
<feature type="active site" description="Proton acceptor" evidence="1">
    <location>
        <position position="320"/>
    </location>
</feature>
<feature type="binding site" evidence="1">
    <location>
        <position position="22"/>
    </location>
    <ligand>
        <name>3-phosphoshikimate</name>
        <dbReference type="ChEBI" id="CHEBI:145989"/>
    </ligand>
</feature>
<feature type="binding site" evidence="1">
    <location>
        <position position="22"/>
    </location>
    <ligand>
        <name>phosphoenolpyruvate</name>
        <dbReference type="ChEBI" id="CHEBI:58702"/>
    </ligand>
</feature>
<feature type="binding site" evidence="1">
    <location>
        <position position="23"/>
    </location>
    <ligand>
        <name>3-phosphoshikimate</name>
        <dbReference type="ChEBI" id="CHEBI:145989"/>
    </ligand>
</feature>
<feature type="binding site" evidence="1">
    <location>
        <position position="27"/>
    </location>
    <ligand>
        <name>3-phosphoshikimate</name>
        <dbReference type="ChEBI" id="CHEBI:145989"/>
    </ligand>
</feature>
<feature type="binding site" evidence="1">
    <location>
        <position position="93"/>
    </location>
    <ligand>
        <name>phosphoenolpyruvate</name>
        <dbReference type="ChEBI" id="CHEBI:58702"/>
    </ligand>
</feature>
<feature type="binding site" evidence="1">
    <location>
        <position position="121"/>
    </location>
    <ligand>
        <name>phosphoenolpyruvate</name>
        <dbReference type="ChEBI" id="CHEBI:58702"/>
    </ligand>
</feature>
<feature type="binding site" evidence="1">
    <location>
        <position position="168"/>
    </location>
    <ligand>
        <name>3-phosphoshikimate</name>
        <dbReference type="ChEBI" id="CHEBI:145989"/>
    </ligand>
</feature>
<feature type="binding site" evidence="1">
    <location>
        <position position="169"/>
    </location>
    <ligand>
        <name>3-phosphoshikimate</name>
        <dbReference type="ChEBI" id="CHEBI:145989"/>
    </ligand>
</feature>
<feature type="binding site" evidence="1">
    <location>
        <position position="170"/>
    </location>
    <ligand>
        <name>3-phosphoshikimate</name>
        <dbReference type="ChEBI" id="CHEBI:145989"/>
    </ligand>
</feature>
<feature type="binding site" evidence="1">
    <location>
        <position position="170"/>
    </location>
    <ligand>
        <name>phosphoenolpyruvate</name>
        <dbReference type="ChEBI" id="CHEBI:58702"/>
    </ligand>
</feature>
<feature type="binding site" evidence="1">
    <location>
        <position position="199"/>
    </location>
    <ligand>
        <name>3-phosphoshikimate</name>
        <dbReference type="ChEBI" id="CHEBI:145989"/>
    </ligand>
</feature>
<feature type="binding site" evidence="1">
    <location>
        <position position="320"/>
    </location>
    <ligand>
        <name>3-phosphoshikimate</name>
        <dbReference type="ChEBI" id="CHEBI:145989"/>
    </ligand>
</feature>
<feature type="binding site" evidence="1">
    <location>
        <position position="347"/>
    </location>
    <ligand>
        <name>3-phosphoshikimate</name>
        <dbReference type="ChEBI" id="CHEBI:145989"/>
    </ligand>
</feature>
<feature type="binding site" evidence="1">
    <location>
        <position position="351"/>
    </location>
    <ligand>
        <name>phosphoenolpyruvate</name>
        <dbReference type="ChEBI" id="CHEBI:58702"/>
    </ligand>
</feature>
<feature type="binding site" evidence="1">
    <location>
        <position position="394"/>
    </location>
    <ligand>
        <name>phosphoenolpyruvate</name>
        <dbReference type="ChEBI" id="CHEBI:58702"/>
    </ligand>
</feature>
<feature type="binding site" evidence="1">
    <location>
        <position position="419"/>
    </location>
    <ligand>
        <name>phosphoenolpyruvate</name>
        <dbReference type="ChEBI" id="CHEBI:58702"/>
    </ligand>
</feature>
<evidence type="ECO:0000255" key="1">
    <source>
        <dbReference type="HAMAP-Rule" id="MF_00210"/>
    </source>
</evidence>
<comment type="function">
    <text evidence="1">Catalyzes the transfer of the enolpyruvyl moiety of phosphoenolpyruvate (PEP) to the 5-hydroxyl of shikimate-3-phosphate (S3P) to produce enolpyruvyl shikimate-3-phosphate and inorganic phosphate.</text>
</comment>
<comment type="catalytic activity">
    <reaction evidence="1">
        <text>3-phosphoshikimate + phosphoenolpyruvate = 5-O-(1-carboxyvinyl)-3-phosphoshikimate + phosphate</text>
        <dbReference type="Rhea" id="RHEA:21256"/>
        <dbReference type="ChEBI" id="CHEBI:43474"/>
        <dbReference type="ChEBI" id="CHEBI:57701"/>
        <dbReference type="ChEBI" id="CHEBI:58702"/>
        <dbReference type="ChEBI" id="CHEBI:145989"/>
        <dbReference type="EC" id="2.5.1.19"/>
    </reaction>
    <physiologicalReaction direction="left-to-right" evidence="1">
        <dbReference type="Rhea" id="RHEA:21257"/>
    </physiologicalReaction>
</comment>
<comment type="pathway">
    <text evidence="1">Metabolic intermediate biosynthesis; chorismate biosynthesis; chorismate from D-erythrose 4-phosphate and phosphoenolpyruvate: step 6/7.</text>
</comment>
<comment type="subunit">
    <text evidence="1">Monomer.</text>
</comment>
<comment type="subcellular location">
    <subcellularLocation>
        <location evidence="1">Cytoplasm</location>
    </subcellularLocation>
</comment>
<comment type="similarity">
    <text evidence="1">Belongs to the EPSP synthase family.</text>
</comment>